<gene>
    <name evidence="1" type="primary">fabA</name>
    <name type="ordered locus">PputW619_3497</name>
</gene>
<protein>
    <recommendedName>
        <fullName evidence="1">3-hydroxydecanoyl-[acyl-carrier-protein] dehydratase</fullName>
        <ecNumber evidence="1">4.2.1.59</ecNumber>
    </recommendedName>
    <alternativeName>
        <fullName evidence="1">3-hydroxyacyl-[acyl-carrier-protein] dehydratase FabA</fullName>
    </alternativeName>
    <alternativeName>
        <fullName evidence="1">Beta-hydroxydecanoyl thioester dehydrase</fullName>
    </alternativeName>
    <alternativeName>
        <fullName evidence="1">Trans-2-decenoyl-[acyl-carrier-protein] isomerase</fullName>
        <ecNumber evidence="1">5.3.3.14</ecNumber>
    </alternativeName>
</protein>
<evidence type="ECO:0000255" key="1">
    <source>
        <dbReference type="HAMAP-Rule" id="MF_00405"/>
    </source>
</evidence>
<proteinExistence type="inferred from homology"/>
<name>FABA_PSEPW</name>
<sequence length="171" mass="18764">MTKQHAFTREDLLRCSRGELFGPGNAQLPAPNMLMVDRITHISEEGGKYGKGELVAELDITPDLWFFACHFEGDPVMPGCLGLDAMWQLVGFFLGWQGLPGRGRALGSGEVKFFGQVLPTAKKVTYNIHIKRVLKGKLNMAIADGSVSVDGREIYTAEALRVGVFTSTDNF</sequence>
<keyword id="KW-0963">Cytoplasm</keyword>
<keyword id="KW-0275">Fatty acid biosynthesis</keyword>
<keyword id="KW-0276">Fatty acid metabolism</keyword>
<keyword id="KW-0413">Isomerase</keyword>
<keyword id="KW-0444">Lipid biosynthesis</keyword>
<keyword id="KW-0443">Lipid metabolism</keyword>
<keyword id="KW-0456">Lyase</keyword>
<reference key="1">
    <citation type="submission" date="2008-02" db="EMBL/GenBank/DDBJ databases">
        <title>Complete sequence of Pseudomonas putida W619.</title>
        <authorList>
            <person name="Copeland A."/>
            <person name="Lucas S."/>
            <person name="Lapidus A."/>
            <person name="Barry K."/>
            <person name="Detter J.C."/>
            <person name="Glavina del Rio T."/>
            <person name="Dalin E."/>
            <person name="Tice H."/>
            <person name="Pitluck S."/>
            <person name="Chain P."/>
            <person name="Malfatti S."/>
            <person name="Shin M."/>
            <person name="Vergez L."/>
            <person name="Schmutz J."/>
            <person name="Larimer F."/>
            <person name="Land M."/>
            <person name="Hauser L."/>
            <person name="Kyrpides N."/>
            <person name="Kim E."/>
            <person name="Taghavi S."/>
            <person name="Vangronsveld D."/>
            <person name="van der Lelie D."/>
            <person name="Richardson P."/>
        </authorList>
    </citation>
    <scope>NUCLEOTIDE SEQUENCE [LARGE SCALE GENOMIC DNA]</scope>
    <source>
        <strain>W619</strain>
    </source>
</reference>
<feature type="chain" id="PRO_1000201195" description="3-hydroxydecanoyl-[acyl-carrier-protein] dehydratase">
    <location>
        <begin position="1"/>
        <end position="171"/>
    </location>
</feature>
<feature type="active site" evidence="1">
    <location>
        <position position="70"/>
    </location>
</feature>
<dbReference type="EC" id="4.2.1.59" evidence="1"/>
<dbReference type="EC" id="5.3.3.14" evidence="1"/>
<dbReference type="EMBL" id="CP000949">
    <property type="protein sequence ID" value="ACA73980.1"/>
    <property type="molecule type" value="Genomic_DNA"/>
</dbReference>
<dbReference type="SMR" id="B1JAU1"/>
<dbReference type="STRING" id="390235.PputW619_3497"/>
<dbReference type="KEGG" id="ppw:PputW619_3497"/>
<dbReference type="eggNOG" id="COG0764">
    <property type="taxonomic scope" value="Bacteria"/>
</dbReference>
<dbReference type="HOGENOM" id="CLU_097925_0_0_6"/>
<dbReference type="OrthoDB" id="9786735at2"/>
<dbReference type="UniPathway" id="UPA00094"/>
<dbReference type="GO" id="GO:0005737">
    <property type="term" value="C:cytoplasm"/>
    <property type="evidence" value="ECO:0007669"/>
    <property type="project" value="UniProtKB-SubCell"/>
</dbReference>
<dbReference type="GO" id="GO:0019171">
    <property type="term" value="F:(3R)-hydroxyacyl-[acyl-carrier-protein] dehydratase activity"/>
    <property type="evidence" value="ECO:0007669"/>
    <property type="project" value="UniProtKB-UniRule"/>
</dbReference>
<dbReference type="GO" id="GO:0034017">
    <property type="term" value="F:trans-2-decenoyl-acyl-carrier-protein isomerase activity"/>
    <property type="evidence" value="ECO:0007669"/>
    <property type="project" value="UniProtKB-UniRule"/>
</dbReference>
<dbReference type="GO" id="GO:0006636">
    <property type="term" value="P:unsaturated fatty acid biosynthetic process"/>
    <property type="evidence" value="ECO:0007669"/>
    <property type="project" value="UniProtKB-UniRule"/>
</dbReference>
<dbReference type="CDD" id="cd01287">
    <property type="entry name" value="FabA"/>
    <property type="match status" value="1"/>
</dbReference>
<dbReference type="FunFam" id="3.10.129.10:FF:000003">
    <property type="entry name" value="3-hydroxydecanoyl-[acyl-carrier-protein] dehydratase"/>
    <property type="match status" value="1"/>
</dbReference>
<dbReference type="Gene3D" id="3.10.129.10">
    <property type="entry name" value="Hotdog Thioesterase"/>
    <property type="match status" value="1"/>
</dbReference>
<dbReference type="HAMAP" id="MF_00405">
    <property type="entry name" value="FabA"/>
    <property type="match status" value="1"/>
</dbReference>
<dbReference type="InterPro" id="IPR010083">
    <property type="entry name" value="FabA"/>
</dbReference>
<dbReference type="InterPro" id="IPR013114">
    <property type="entry name" value="FabA_FabZ"/>
</dbReference>
<dbReference type="InterPro" id="IPR029069">
    <property type="entry name" value="HotDog_dom_sf"/>
</dbReference>
<dbReference type="NCBIfam" id="TIGR01749">
    <property type="entry name" value="fabA"/>
    <property type="match status" value="1"/>
</dbReference>
<dbReference type="NCBIfam" id="NF003509">
    <property type="entry name" value="PRK05174.1"/>
    <property type="match status" value="1"/>
</dbReference>
<dbReference type="PANTHER" id="PTHR30272">
    <property type="entry name" value="3-HYDROXYACYL-[ACYL-CARRIER-PROTEIN] DEHYDRATASE"/>
    <property type="match status" value="1"/>
</dbReference>
<dbReference type="PANTHER" id="PTHR30272:SF8">
    <property type="entry name" value="3-HYDROXYDECANOYL-[ACYL-CARRIER-PROTEIN] DEHYDRATASE"/>
    <property type="match status" value="1"/>
</dbReference>
<dbReference type="Pfam" id="PF07977">
    <property type="entry name" value="FabA"/>
    <property type="match status" value="1"/>
</dbReference>
<dbReference type="SUPFAM" id="SSF54637">
    <property type="entry name" value="Thioesterase/thiol ester dehydrase-isomerase"/>
    <property type="match status" value="1"/>
</dbReference>
<accession>B1JAU1</accession>
<comment type="function">
    <text evidence="1">Necessary for the introduction of cis unsaturation into fatty acids. Catalyzes the dehydration of (3R)-3-hydroxydecanoyl-ACP to E-(2)-decenoyl-ACP and then its isomerization to Z-(3)-decenoyl-ACP. Can catalyze the dehydratase reaction for beta-hydroxyacyl-ACPs with saturated chain lengths up to 16:0, being most active on intermediate chain length.</text>
</comment>
<comment type="catalytic activity">
    <reaction evidence="1">
        <text>a (3R)-hydroxyacyl-[ACP] = a (2E)-enoyl-[ACP] + H2O</text>
        <dbReference type="Rhea" id="RHEA:13097"/>
        <dbReference type="Rhea" id="RHEA-COMP:9925"/>
        <dbReference type="Rhea" id="RHEA-COMP:9945"/>
        <dbReference type="ChEBI" id="CHEBI:15377"/>
        <dbReference type="ChEBI" id="CHEBI:78784"/>
        <dbReference type="ChEBI" id="CHEBI:78827"/>
        <dbReference type="EC" id="4.2.1.59"/>
    </reaction>
</comment>
<comment type="catalytic activity">
    <reaction evidence="1">
        <text>(3R)-hydroxydecanoyl-[ACP] = (2E)-decenoyl-[ACP] + H2O</text>
        <dbReference type="Rhea" id="RHEA:41860"/>
        <dbReference type="Rhea" id="RHEA-COMP:9638"/>
        <dbReference type="Rhea" id="RHEA-COMP:9639"/>
        <dbReference type="ChEBI" id="CHEBI:15377"/>
        <dbReference type="ChEBI" id="CHEBI:78466"/>
        <dbReference type="ChEBI" id="CHEBI:78467"/>
    </reaction>
</comment>
<comment type="catalytic activity">
    <reaction evidence="1">
        <text>(2E)-decenoyl-[ACP] = (3Z)-decenoyl-[ACP]</text>
        <dbReference type="Rhea" id="RHEA:23568"/>
        <dbReference type="Rhea" id="RHEA-COMP:9639"/>
        <dbReference type="Rhea" id="RHEA-COMP:9927"/>
        <dbReference type="ChEBI" id="CHEBI:78467"/>
        <dbReference type="ChEBI" id="CHEBI:78798"/>
        <dbReference type="EC" id="5.3.3.14"/>
    </reaction>
</comment>
<comment type="pathway">
    <text evidence="1">Lipid metabolism; fatty acid biosynthesis.</text>
</comment>
<comment type="subunit">
    <text evidence="1">Homodimer.</text>
</comment>
<comment type="subcellular location">
    <subcellularLocation>
        <location evidence="1">Cytoplasm</location>
    </subcellularLocation>
</comment>
<comment type="similarity">
    <text evidence="1">Belongs to the thioester dehydratase family. FabA subfamily.</text>
</comment>
<organism>
    <name type="scientific">Pseudomonas putida (strain W619)</name>
    <dbReference type="NCBI Taxonomy" id="390235"/>
    <lineage>
        <taxon>Bacteria</taxon>
        <taxon>Pseudomonadati</taxon>
        <taxon>Pseudomonadota</taxon>
        <taxon>Gammaproteobacteria</taxon>
        <taxon>Pseudomonadales</taxon>
        <taxon>Pseudomonadaceae</taxon>
        <taxon>Pseudomonas</taxon>
    </lineage>
</organism>